<sequence>MKKTLLASSLAVGLGIVAGNAGHEAHASEADLNKASLAQMAQSNDQTLNQKPIEAGAYNYTFDYEGFTYHFESDGTHFAWNYHATGANGANMSAQAPATNNVEPSAVQANQVQSQEVEAPQNAQTQQPQASTSNNSQVTATPTESKASEGSSVNVNAHLKQIAQRESGGNIHAVNPTSGAAGKYQFLQSTWDSVAPAKYKGVSPANAPESVQDAAAVKLYNTGGAGHWVTA</sequence>
<gene>
    <name type="primary">sceD</name>
    <name type="ordered locus">SAHV_2080</name>
</gene>
<reference key="1">
    <citation type="journal article" date="2008" name="Antimicrob. Agents Chemother.">
        <title>Mutated response regulator graR is responsible for phenotypic conversion of Staphylococcus aureus from heterogeneous vancomycin-intermediate resistance to vancomycin-intermediate resistance.</title>
        <authorList>
            <person name="Neoh H.-M."/>
            <person name="Cui L."/>
            <person name="Yuzawa H."/>
            <person name="Takeuchi F."/>
            <person name="Matsuo M."/>
            <person name="Hiramatsu K."/>
        </authorList>
    </citation>
    <scope>NUCLEOTIDE SEQUENCE [LARGE SCALE GENOMIC DNA]</scope>
    <source>
        <strain>Mu3 / ATCC 700698</strain>
    </source>
</reference>
<feature type="signal peptide" evidence="2">
    <location>
        <begin position="1"/>
        <end position="27"/>
    </location>
</feature>
<feature type="chain" id="PRO_0000320307" description="Probable transglycosylase SceD">
    <location>
        <begin position="28"/>
        <end position="231"/>
    </location>
</feature>
<feature type="region of interest" description="Disordered" evidence="3">
    <location>
        <begin position="93"/>
        <end position="152"/>
    </location>
</feature>
<feature type="compositionally biased region" description="Polar residues" evidence="3">
    <location>
        <begin position="93"/>
        <end position="116"/>
    </location>
</feature>
<feature type="compositionally biased region" description="Low complexity" evidence="3">
    <location>
        <begin position="119"/>
        <end position="137"/>
    </location>
</feature>
<feature type="compositionally biased region" description="Polar residues" evidence="3">
    <location>
        <begin position="138"/>
        <end position="152"/>
    </location>
</feature>
<dbReference type="EC" id="3.2.-.-"/>
<dbReference type="EMBL" id="AP009324">
    <property type="protein sequence ID" value="BAF78963.1"/>
    <property type="molecule type" value="Genomic_DNA"/>
</dbReference>
<dbReference type="RefSeq" id="WP_000752005.1">
    <property type="nucleotide sequence ID" value="NC_009782.1"/>
</dbReference>
<dbReference type="SMR" id="A7X4T4"/>
<dbReference type="CAZy" id="GH23">
    <property type="family name" value="Glycoside Hydrolase Family 23"/>
</dbReference>
<dbReference type="KEGG" id="saw:SAHV_2080"/>
<dbReference type="HOGENOM" id="CLU_099865_0_0_9"/>
<dbReference type="GO" id="GO:0005576">
    <property type="term" value="C:extracellular region"/>
    <property type="evidence" value="ECO:0007669"/>
    <property type="project" value="UniProtKB-SubCell"/>
</dbReference>
<dbReference type="GO" id="GO:0016798">
    <property type="term" value="F:hydrolase activity, acting on glycosyl bonds"/>
    <property type="evidence" value="ECO:0007669"/>
    <property type="project" value="UniProtKB-KW"/>
</dbReference>
<dbReference type="CDD" id="cd13925">
    <property type="entry name" value="RPF"/>
    <property type="match status" value="1"/>
</dbReference>
<dbReference type="Gene3D" id="1.10.530.10">
    <property type="match status" value="1"/>
</dbReference>
<dbReference type="InterPro" id="IPR023346">
    <property type="entry name" value="Lysozyme-like_dom_sf"/>
</dbReference>
<dbReference type="InterPro" id="IPR010618">
    <property type="entry name" value="RPF"/>
</dbReference>
<dbReference type="Pfam" id="PF06737">
    <property type="entry name" value="Transglycosylas"/>
    <property type="match status" value="1"/>
</dbReference>
<dbReference type="SUPFAM" id="SSF53955">
    <property type="entry name" value="Lysozyme-like"/>
    <property type="match status" value="1"/>
</dbReference>
<organism>
    <name type="scientific">Staphylococcus aureus (strain Mu3 / ATCC 700698)</name>
    <dbReference type="NCBI Taxonomy" id="418127"/>
    <lineage>
        <taxon>Bacteria</taxon>
        <taxon>Bacillati</taxon>
        <taxon>Bacillota</taxon>
        <taxon>Bacilli</taxon>
        <taxon>Bacillales</taxon>
        <taxon>Staphylococcaceae</taxon>
        <taxon>Staphylococcus</taxon>
    </lineage>
</organism>
<comment type="function">
    <text evidence="1">Is able to cleave peptidoglycan and affects clumping and separation of bacterial cells.</text>
</comment>
<comment type="subcellular location">
    <subcellularLocation>
        <location evidence="1">Secreted</location>
    </subcellularLocation>
</comment>
<comment type="induction">
    <text evidence="1">Positively regulated by sigma B factor.</text>
</comment>
<comment type="similarity">
    <text evidence="4">Belongs to the transglycosylase family. SceD subfamily.</text>
</comment>
<protein>
    <recommendedName>
        <fullName>Probable transglycosylase SceD</fullName>
        <ecNumber>3.2.-.-</ecNumber>
    </recommendedName>
</protein>
<proteinExistence type="inferred from homology"/>
<name>SCED_STAA1</name>
<keyword id="KW-0326">Glycosidase</keyword>
<keyword id="KW-0378">Hydrolase</keyword>
<keyword id="KW-0964">Secreted</keyword>
<keyword id="KW-0732">Signal</keyword>
<evidence type="ECO:0000250" key="1"/>
<evidence type="ECO:0000255" key="2"/>
<evidence type="ECO:0000256" key="3">
    <source>
        <dbReference type="SAM" id="MobiDB-lite"/>
    </source>
</evidence>
<evidence type="ECO:0000305" key="4"/>
<accession>A7X4T4</accession>